<organism>
    <name type="scientific">Neorickettsia sennetsu (strain ATCC VR-367 / Miyayama)</name>
    <name type="common">Ehrlichia sennetsu</name>
    <dbReference type="NCBI Taxonomy" id="222891"/>
    <lineage>
        <taxon>Bacteria</taxon>
        <taxon>Pseudomonadati</taxon>
        <taxon>Pseudomonadota</taxon>
        <taxon>Alphaproteobacteria</taxon>
        <taxon>Rickettsiales</taxon>
        <taxon>Anaplasmataceae</taxon>
        <taxon>Neorickettsia</taxon>
    </lineage>
</organism>
<proteinExistence type="inferred from homology"/>
<feature type="chain" id="PRO_0000236345" description="Thiazole synthase">
    <location>
        <begin position="1"/>
        <end position="256"/>
    </location>
</feature>
<feature type="active site" description="Schiff-base intermediate with DXP" evidence="1">
    <location>
        <position position="99"/>
    </location>
</feature>
<feature type="binding site" evidence="1">
    <location>
        <position position="160"/>
    </location>
    <ligand>
        <name>1-deoxy-D-xylulose 5-phosphate</name>
        <dbReference type="ChEBI" id="CHEBI:57792"/>
    </ligand>
</feature>
<feature type="binding site" evidence="1">
    <location>
        <begin position="186"/>
        <end position="187"/>
    </location>
    <ligand>
        <name>1-deoxy-D-xylulose 5-phosphate</name>
        <dbReference type="ChEBI" id="CHEBI:57792"/>
    </ligand>
</feature>
<feature type="binding site" evidence="1">
    <location>
        <begin position="208"/>
        <end position="209"/>
    </location>
    <ligand>
        <name>1-deoxy-D-xylulose 5-phosphate</name>
        <dbReference type="ChEBI" id="CHEBI:57792"/>
    </ligand>
</feature>
<dbReference type="EC" id="2.8.1.10" evidence="1"/>
<dbReference type="EMBL" id="CP000237">
    <property type="protein sequence ID" value="ABD46032.1"/>
    <property type="molecule type" value="Genomic_DNA"/>
</dbReference>
<dbReference type="RefSeq" id="WP_011451873.1">
    <property type="nucleotide sequence ID" value="NC_007798.1"/>
</dbReference>
<dbReference type="SMR" id="Q2GDS9"/>
<dbReference type="STRING" id="222891.NSE_0483"/>
<dbReference type="KEGG" id="nse:NSE_0483"/>
<dbReference type="eggNOG" id="COG2022">
    <property type="taxonomic scope" value="Bacteria"/>
</dbReference>
<dbReference type="HOGENOM" id="CLU_062233_1_0_5"/>
<dbReference type="OrthoDB" id="9805935at2"/>
<dbReference type="UniPathway" id="UPA00060"/>
<dbReference type="Proteomes" id="UP000001942">
    <property type="component" value="Chromosome"/>
</dbReference>
<dbReference type="GO" id="GO:0005737">
    <property type="term" value="C:cytoplasm"/>
    <property type="evidence" value="ECO:0007669"/>
    <property type="project" value="UniProtKB-SubCell"/>
</dbReference>
<dbReference type="GO" id="GO:1990107">
    <property type="term" value="F:thiazole synthase activity"/>
    <property type="evidence" value="ECO:0007669"/>
    <property type="project" value="UniProtKB-EC"/>
</dbReference>
<dbReference type="GO" id="GO:0009229">
    <property type="term" value="P:thiamine diphosphate biosynthetic process"/>
    <property type="evidence" value="ECO:0007669"/>
    <property type="project" value="UniProtKB-UniRule"/>
</dbReference>
<dbReference type="CDD" id="cd04728">
    <property type="entry name" value="ThiG"/>
    <property type="match status" value="1"/>
</dbReference>
<dbReference type="Gene3D" id="3.20.20.70">
    <property type="entry name" value="Aldolase class I"/>
    <property type="match status" value="1"/>
</dbReference>
<dbReference type="HAMAP" id="MF_00443">
    <property type="entry name" value="ThiG"/>
    <property type="match status" value="1"/>
</dbReference>
<dbReference type="InterPro" id="IPR013785">
    <property type="entry name" value="Aldolase_TIM"/>
</dbReference>
<dbReference type="InterPro" id="IPR033983">
    <property type="entry name" value="Thiazole_synthase_ThiG"/>
</dbReference>
<dbReference type="InterPro" id="IPR008867">
    <property type="entry name" value="ThiG"/>
</dbReference>
<dbReference type="PANTHER" id="PTHR34266">
    <property type="entry name" value="THIAZOLE SYNTHASE"/>
    <property type="match status" value="1"/>
</dbReference>
<dbReference type="PANTHER" id="PTHR34266:SF2">
    <property type="entry name" value="THIAZOLE SYNTHASE"/>
    <property type="match status" value="1"/>
</dbReference>
<dbReference type="Pfam" id="PF05690">
    <property type="entry name" value="ThiG"/>
    <property type="match status" value="1"/>
</dbReference>
<dbReference type="SUPFAM" id="SSF110399">
    <property type="entry name" value="ThiG-like"/>
    <property type="match status" value="1"/>
</dbReference>
<name>THIG_NEOSM</name>
<protein>
    <recommendedName>
        <fullName evidence="1">Thiazole synthase</fullName>
        <ecNumber evidence="1">2.8.1.10</ecNumber>
    </recommendedName>
</protein>
<reference key="1">
    <citation type="journal article" date="2006" name="PLoS Genet.">
        <title>Comparative genomics of emerging human ehrlichiosis agents.</title>
        <authorList>
            <person name="Dunning Hotopp J.C."/>
            <person name="Lin M."/>
            <person name="Madupu R."/>
            <person name="Crabtree J."/>
            <person name="Angiuoli S.V."/>
            <person name="Eisen J.A."/>
            <person name="Seshadri R."/>
            <person name="Ren Q."/>
            <person name="Wu M."/>
            <person name="Utterback T.R."/>
            <person name="Smith S."/>
            <person name="Lewis M."/>
            <person name="Khouri H."/>
            <person name="Zhang C."/>
            <person name="Niu H."/>
            <person name="Lin Q."/>
            <person name="Ohashi N."/>
            <person name="Zhi N."/>
            <person name="Nelson W.C."/>
            <person name="Brinkac L.M."/>
            <person name="Dodson R.J."/>
            <person name="Rosovitz M.J."/>
            <person name="Sundaram J.P."/>
            <person name="Daugherty S.C."/>
            <person name="Davidsen T."/>
            <person name="Durkin A.S."/>
            <person name="Gwinn M.L."/>
            <person name="Haft D.H."/>
            <person name="Selengut J.D."/>
            <person name="Sullivan S.A."/>
            <person name="Zafar N."/>
            <person name="Zhou L."/>
            <person name="Benahmed F."/>
            <person name="Forberger H."/>
            <person name="Halpin R."/>
            <person name="Mulligan S."/>
            <person name="Robinson J."/>
            <person name="White O."/>
            <person name="Rikihisa Y."/>
            <person name="Tettelin H."/>
        </authorList>
    </citation>
    <scope>NUCLEOTIDE SEQUENCE [LARGE SCALE GENOMIC DNA]</scope>
    <source>
        <strain>ATCC VR-367 / Miyayama</strain>
    </source>
</reference>
<gene>
    <name evidence="1" type="primary">thiG</name>
    <name type="ordered locus">NSE_0483</name>
</gene>
<comment type="function">
    <text evidence="1">Catalyzes the rearrangement of 1-deoxy-D-xylulose 5-phosphate (DXP) to produce the thiazole phosphate moiety of thiamine. Sulfur is provided by the thiocarboxylate moiety of the carrier protein ThiS. In vitro, sulfur can be provided by H(2)S.</text>
</comment>
<comment type="catalytic activity">
    <reaction evidence="1">
        <text>[ThiS sulfur-carrier protein]-C-terminal-Gly-aminoethanethioate + 2-iminoacetate + 1-deoxy-D-xylulose 5-phosphate = [ThiS sulfur-carrier protein]-C-terminal Gly-Gly + 2-[(2R,5Z)-2-carboxy-4-methylthiazol-5(2H)-ylidene]ethyl phosphate + 2 H2O + H(+)</text>
        <dbReference type="Rhea" id="RHEA:26297"/>
        <dbReference type="Rhea" id="RHEA-COMP:12909"/>
        <dbReference type="Rhea" id="RHEA-COMP:19908"/>
        <dbReference type="ChEBI" id="CHEBI:15377"/>
        <dbReference type="ChEBI" id="CHEBI:15378"/>
        <dbReference type="ChEBI" id="CHEBI:57792"/>
        <dbReference type="ChEBI" id="CHEBI:62899"/>
        <dbReference type="ChEBI" id="CHEBI:77846"/>
        <dbReference type="ChEBI" id="CHEBI:90778"/>
        <dbReference type="ChEBI" id="CHEBI:232372"/>
        <dbReference type="EC" id="2.8.1.10"/>
    </reaction>
</comment>
<comment type="pathway">
    <text evidence="1">Cofactor biosynthesis; thiamine diphosphate biosynthesis.</text>
</comment>
<comment type="subunit">
    <text evidence="1">Homotetramer. Forms heterodimers with either ThiH or ThiS.</text>
</comment>
<comment type="subcellular location">
    <subcellularLocation>
        <location evidence="1">Cytoplasm</location>
    </subcellularLocation>
</comment>
<comment type="similarity">
    <text evidence="1">Belongs to the ThiG family.</text>
</comment>
<evidence type="ECO:0000255" key="1">
    <source>
        <dbReference type="HAMAP-Rule" id="MF_00443"/>
    </source>
</evidence>
<keyword id="KW-0963">Cytoplasm</keyword>
<keyword id="KW-0704">Schiff base</keyword>
<keyword id="KW-0784">Thiamine biosynthesis</keyword>
<keyword id="KW-0808">Transferase</keyword>
<sequence>MLDHLEIAGRNFSSRLIVGTGKYKNFDETVKAIEASGAEVVTVALKRVNITDNKRESLQDYLDPKKYTYLPNTAFCFTAGEAVRHLALAREIGGWNLVKVEVFSEKEFLYPDMRETLKAVKILAGEGFHVMPYCNDDPIMCKRLEESGAVAIMPLAAPIGSGLGIQNLFNLKVIVKQSSVPVIVDAGVGTPSDAVIAMEAGCDGVLINTSIAKARFPVQMAKAMKHAVRAGRLGYLAGRMLPQQFASPSSNSSGIV</sequence>
<accession>Q2GDS9</accession>